<evidence type="ECO:0000250" key="1"/>
<evidence type="ECO:0000255" key="2"/>
<evidence type="ECO:0000305" key="3"/>
<dbReference type="EMBL" id="AK002310">
    <property type="protein sequence ID" value="BAB22004.1"/>
    <property type="molecule type" value="mRNA"/>
</dbReference>
<dbReference type="EMBL" id="AK155147">
    <property type="protein sequence ID" value="BAE33077.1"/>
    <property type="molecule type" value="mRNA"/>
</dbReference>
<dbReference type="EMBL" id="BC050923">
    <property type="protein sequence ID" value="AAH50923.1"/>
    <property type="molecule type" value="mRNA"/>
</dbReference>
<dbReference type="EMBL" id="BC063254">
    <property type="protein sequence ID" value="AAH63254.1"/>
    <property type="molecule type" value="mRNA"/>
</dbReference>
<dbReference type="CCDS" id="CCDS23308.1"/>
<dbReference type="RefSeq" id="NP_080950.1">
    <property type="nucleotide sequence ID" value="NM_026674.4"/>
</dbReference>
<dbReference type="SMR" id="Q9DCZ9"/>
<dbReference type="FunCoup" id="Q9DCZ9">
    <property type="interactions" value="1157"/>
</dbReference>
<dbReference type="STRING" id="10090.ENSMUSP00000130359"/>
<dbReference type="TCDB" id="4.G.1.1.1">
    <property type="family name" value="the Gama-secretase (Gama-secretase) family"/>
</dbReference>
<dbReference type="iPTMnet" id="Q9DCZ9"/>
<dbReference type="PhosphoSitePlus" id="Q9DCZ9"/>
<dbReference type="SwissPalm" id="Q9DCZ9"/>
<dbReference type="PaxDb" id="10090-ENSMUSP00000130359"/>
<dbReference type="ProteomicsDB" id="281799"/>
<dbReference type="DNASU" id="68318"/>
<dbReference type="Ensembl" id="ENSMUST00000169282.8">
    <property type="protein sequence ID" value="ENSMUSP00000130359.2"/>
    <property type="gene ID" value="ENSMUSG00000053040.14"/>
</dbReference>
<dbReference type="GeneID" id="68318"/>
<dbReference type="KEGG" id="mmu:68318"/>
<dbReference type="UCSC" id="uc009qfi.1">
    <property type="organism name" value="mouse"/>
</dbReference>
<dbReference type="AGR" id="MGI:1915568"/>
<dbReference type="CTD" id="68318"/>
<dbReference type="MGI" id="MGI:1915568">
    <property type="gene designation" value="Aph1c"/>
</dbReference>
<dbReference type="VEuPathDB" id="HostDB:ENSMUSG00000053040"/>
<dbReference type="eggNOG" id="KOG3972">
    <property type="taxonomic scope" value="Eukaryota"/>
</dbReference>
<dbReference type="GeneTree" id="ENSGT00390000002049"/>
<dbReference type="HOGENOM" id="CLU_086389_0_0_1"/>
<dbReference type="InParanoid" id="Q9DCZ9"/>
<dbReference type="OMA" id="WFMARAI"/>
<dbReference type="OrthoDB" id="6507463at2759"/>
<dbReference type="PhylomeDB" id="Q9DCZ9"/>
<dbReference type="TreeFam" id="TF314362"/>
<dbReference type="BioGRID-ORCS" id="68318">
    <property type="hits" value="3 hits in 76 CRISPR screens"/>
</dbReference>
<dbReference type="ChiTaRS" id="Aph1c">
    <property type="organism name" value="mouse"/>
</dbReference>
<dbReference type="PRO" id="PR:Q9DCZ9"/>
<dbReference type="Proteomes" id="UP000000589">
    <property type="component" value="Chromosome 9"/>
</dbReference>
<dbReference type="RNAct" id="Q9DCZ9">
    <property type="molecule type" value="protein"/>
</dbReference>
<dbReference type="Bgee" id="ENSMUSG00000053040">
    <property type="expression patterns" value="Expressed in proximal tubule and 61 other cell types or tissues"/>
</dbReference>
<dbReference type="ExpressionAtlas" id="Q9DCZ9">
    <property type="expression patterns" value="baseline and differential"/>
</dbReference>
<dbReference type="GO" id="GO:0070765">
    <property type="term" value="C:gamma-secretase complex"/>
    <property type="evidence" value="ECO:0000314"/>
    <property type="project" value="MGI"/>
</dbReference>
<dbReference type="GO" id="GO:0016020">
    <property type="term" value="C:membrane"/>
    <property type="evidence" value="ECO:0000247"/>
    <property type="project" value="MGI"/>
</dbReference>
<dbReference type="GO" id="GO:0005886">
    <property type="term" value="C:plasma membrane"/>
    <property type="evidence" value="ECO:0000304"/>
    <property type="project" value="Reactome"/>
</dbReference>
<dbReference type="GO" id="GO:0045202">
    <property type="term" value="C:synapse"/>
    <property type="evidence" value="ECO:0007669"/>
    <property type="project" value="GOC"/>
</dbReference>
<dbReference type="GO" id="GO:0006509">
    <property type="term" value="P:membrane protein ectodomain proteolysis"/>
    <property type="evidence" value="ECO:0000316"/>
    <property type="project" value="MGI"/>
</dbReference>
<dbReference type="GO" id="GO:0001656">
    <property type="term" value="P:metanephros development"/>
    <property type="evidence" value="ECO:0000315"/>
    <property type="project" value="MGI"/>
</dbReference>
<dbReference type="GO" id="GO:0007219">
    <property type="term" value="P:Notch signaling pathway"/>
    <property type="evidence" value="ECO:0007669"/>
    <property type="project" value="UniProtKB-KW"/>
</dbReference>
<dbReference type="GO" id="GO:0060134">
    <property type="term" value="P:prepulse inhibition"/>
    <property type="evidence" value="ECO:0000316"/>
    <property type="project" value="MGI"/>
</dbReference>
<dbReference type="GO" id="GO:0016485">
    <property type="term" value="P:protein processing"/>
    <property type="evidence" value="ECO:0000316"/>
    <property type="project" value="MGI"/>
</dbReference>
<dbReference type="GO" id="GO:0007614">
    <property type="term" value="P:short-term memory"/>
    <property type="evidence" value="ECO:0000316"/>
    <property type="project" value="MGI"/>
</dbReference>
<dbReference type="GO" id="GO:0001963">
    <property type="term" value="P:synaptic transmission, dopaminergic"/>
    <property type="evidence" value="ECO:0000316"/>
    <property type="project" value="MGI"/>
</dbReference>
<dbReference type="GO" id="GO:0035249">
    <property type="term" value="P:synaptic transmission, glutamatergic"/>
    <property type="evidence" value="ECO:0000316"/>
    <property type="project" value="MGI"/>
</dbReference>
<dbReference type="InterPro" id="IPR009294">
    <property type="entry name" value="Aph-1"/>
</dbReference>
<dbReference type="PANTHER" id="PTHR12889">
    <property type="entry name" value="GAMMA-SECRETASE SUBUNIT APH-1"/>
    <property type="match status" value="1"/>
</dbReference>
<dbReference type="Pfam" id="PF06105">
    <property type="entry name" value="Aph-1"/>
    <property type="match status" value="1"/>
</dbReference>
<organism>
    <name type="scientific">Mus musculus</name>
    <name type="common">Mouse</name>
    <dbReference type="NCBI Taxonomy" id="10090"/>
    <lineage>
        <taxon>Eukaryota</taxon>
        <taxon>Metazoa</taxon>
        <taxon>Chordata</taxon>
        <taxon>Craniata</taxon>
        <taxon>Vertebrata</taxon>
        <taxon>Euteleostomi</taxon>
        <taxon>Mammalia</taxon>
        <taxon>Eutheria</taxon>
        <taxon>Euarchontoglires</taxon>
        <taxon>Glires</taxon>
        <taxon>Rodentia</taxon>
        <taxon>Myomorpha</taxon>
        <taxon>Muroidea</taxon>
        <taxon>Muridae</taxon>
        <taxon>Murinae</taxon>
        <taxon>Mus</taxon>
        <taxon>Mus</taxon>
    </lineage>
</organism>
<sequence length="258" mass="29045">MTLPVFFGCAFIAFGPAFALYLFTIATDPLRVIFLIAGAFFWLVSLLLSSMFWFLVRVITNNRDESVQNYLLIFGALLSVCIQELFRLAYYKLLKKASEGLKSINPEEDIAPSMRLLAYVSGLGFGIMSGVFSFVNTLSNSLGPGTVGIHGDSPQFFLNSAFMTLVVIMLHVFWGVVFFDGCEKNKWYTLLTVLLTHLVVSTQTFLSPYYEVNLVTAYIIMVLMGIWAFYVAGGSCRSLKFCLLCQDKDFLLYNQRSR</sequence>
<accession>Q9DCZ9</accession>
<accession>Q3U2R3</accession>
<comment type="function">
    <text evidence="1">Potential subunit of the gamma-secretase complex, an endoprotease complex that catalyzes the intramembrane cleavage of integral proteins such as Notch receptors and APP (amyloid-beta precursor protein).</text>
</comment>
<comment type="subunit">
    <text evidence="1">Potential component of the gamma-secretase complex.</text>
</comment>
<comment type="subcellular location">
    <subcellularLocation>
        <location evidence="3">Membrane</location>
        <topology evidence="3">Multi-pass membrane protein</topology>
    </subcellularLocation>
</comment>
<comment type="similarity">
    <text evidence="3">Belongs to the APH-1 family.</text>
</comment>
<gene>
    <name type="primary">Aph1c</name>
</gene>
<protein>
    <recommendedName>
        <fullName>Putative gamma-secretase subunit APH-1C</fullName>
    </recommendedName>
</protein>
<keyword id="KW-0472">Membrane</keyword>
<keyword id="KW-0914">Notch signaling pathway</keyword>
<keyword id="KW-1185">Reference proteome</keyword>
<keyword id="KW-0812">Transmembrane</keyword>
<keyword id="KW-1133">Transmembrane helix</keyword>
<proteinExistence type="evidence at transcript level"/>
<name>APH1C_MOUSE</name>
<reference key="1">
    <citation type="journal article" date="2005" name="Science">
        <title>The transcriptional landscape of the mammalian genome.</title>
        <authorList>
            <person name="Carninci P."/>
            <person name="Kasukawa T."/>
            <person name="Katayama S."/>
            <person name="Gough J."/>
            <person name="Frith M.C."/>
            <person name="Maeda N."/>
            <person name="Oyama R."/>
            <person name="Ravasi T."/>
            <person name="Lenhard B."/>
            <person name="Wells C."/>
            <person name="Kodzius R."/>
            <person name="Shimokawa K."/>
            <person name="Bajic V.B."/>
            <person name="Brenner S.E."/>
            <person name="Batalov S."/>
            <person name="Forrest A.R."/>
            <person name="Zavolan M."/>
            <person name="Davis M.J."/>
            <person name="Wilming L.G."/>
            <person name="Aidinis V."/>
            <person name="Allen J.E."/>
            <person name="Ambesi-Impiombato A."/>
            <person name="Apweiler R."/>
            <person name="Aturaliya R.N."/>
            <person name="Bailey T.L."/>
            <person name="Bansal M."/>
            <person name="Baxter L."/>
            <person name="Beisel K.W."/>
            <person name="Bersano T."/>
            <person name="Bono H."/>
            <person name="Chalk A.M."/>
            <person name="Chiu K.P."/>
            <person name="Choudhary V."/>
            <person name="Christoffels A."/>
            <person name="Clutterbuck D.R."/>
            <person name="Crowe M.L."/>
            <person name="Dalla E."/>
            <person name="Dalrymple B.P."/>
            <person name="de Bono B."/>
            <person name="Della Gatta G."/>
            <person name="di Bernardo D."/>
            <person name="Down T."/>
            <person name="Engstrom P."/>
            <person name="Fagiolini M."/>
            <person name="Faulkner G."/>
            <person name="Fletcher C.F."/>
            <person name="Fukushima T."/>
            <person name="Furuno M."/>
            <person name="Futaki S."/>
            <person name="Gariboldi M."/>
            <person name="Georgii-Hemming P."/>
            <person name="Gingeras T.R."/>
            <person name="Gojobori T."/>
            <person name="Green R.E."/>
            <person name="Gustincich S."/>
            <person name="Harbers M."/>
            <person name="Hayashi Y."/>
            <person name="Hensch T.K."/>
            <person name="Hirokawa N."/>
            <person name="Hill D."/>
            <person name="Huminiecki L."/>
            <person name="Iacono M."/>
            <person name="Ikeo K."/>
            <person name="Iwama A."/>
            <person name="Ishikawa T."/>
            <person name="Jakt M."/>
            <person name="Kanapin A."/>
            <person name="Katoh M."/>
            <person name="Kawasawa Y."/>
            <person name="Kelso J."/>
            <person name="Kitamura H."/>
            <person name="Kitano H."/>
            <person name="Kollias G."/>
            <person name="Krishnan S.P."/>
            <person name="Kruger A."/>
            <person name="Kummerfeld S.K."/>
            <person name="Kurochkin I.V."/>
            <person name="Lareau L.F."/>
            <person name="Lazarevic D."/>
            <person name="Lipovich L."/>
            <person name="Liu J."/>
            <person name="Liuni S."/>
            <person name="McWilliam S."/>
            <person name="Madan Babu M."/>
            <person name="Madera M."/>
            <person name="Marchionni L."/>
            <person name="Matsuda H."/>
            <person name="Matsuzawa S."/>
            <person name="Miki H."/>
            <person name="Mignone F."/>
            <person name="Miyake S."/>
            <person name="Morris K."/>
            <person name="Mottagui-Tabar S."/>
            <person name="Mulder N."/>
            <person name="Nakano N."/>
            <person name="Nakauchi H."/>
            <person name="Ng P."/>
            <person name="Nilsson R."/>
            <person name="Nishiguchi S."/>
            <person name="Nishikawa S."/>
            <person name="Nori F."/>
            <person name="Ohara O."/>
            <person name="Okazaki Y."/>
            <person name="Orlando V."/>
            <person name="Pang K.C."/>
            <person name="Pavan W.J."/>
            <person name="Pavesi G."/>
            <person name="Pesole G."/>
            <person name="Petrovsky N."/>
            <person name="Piazza S."/>
            <person name="Reed J."/>
            <person name="Reid J.F."/>
            <person name="Ring B.Z."/>
            <person name="Ringwald M."/>
            <person name="Rost B."/>
            <person name="Ruan Y."/>
            <person name="Salzberg S.L."/>
            <person name="Sandelin A."/>
            <person name="Schneider C."/>
            <person name="Schoenbach C."/>
            <person name="Sekiguchi K."/>
            <person name="Semple C.A."/>
            <person name="Seno S."/>
            <person name="Sessa L."/>
            <person name="Sheng Y."/>
            <person name="Shibata Y."/>
            <person name="Shimada H."/>
            <person name="Shimada K."/>
            <person name="Silva D."/>
            <person name="Sinclair B."/>
            <person name="Sperling S."/>
            <person name="Stupka E."/>
            <person name="Sugiura K."/>
            <person name="Sultana R."/>
            <person name="Takenaka Y."/>
            <person name="Taki K."/>
            <person name="Tammoja K."/>
            <person name="Tan S.L."/>
            <person name="Tang S."/>
            <person name="Taylor M.S."/>
            <person name="Tegner J."/>
            <person name="Teichmann S.A."/>
            <person name="Ueda H.R."/>
            <person name="van Nimwegen E."/>
            <person name="Verardo R."/>
            <person name="Wei C.L."/>
            <person name="Yagi K."/>
            <person name="Yamanishi H."/>
            <person name="Zabarovsky E."/>
            <person name="Zhu S."/>
            <person name="Zimmer A."/>
            <person name="Hide W."/>
            <person name="Bult C."/>
            <person name="Grimmond S.M."/>
            <person name="Teasdale R.D."/>
            <person name="Liu E.T."/>
            <person name="Brusic V."/>
            <person name="Quackenbush J."/>
            <person name="Wahlestedt C."/>
            <person name="Mattick J.S."/>
            <person name="Hume D.A."/>
            <person name="Kai C."/>
            <person name="Sasaki D."/>
            <person name="Tomaru Y."/>
            <person name="Fukuda S."/>
            <person name="Kanamori-Katayama M."/>
            <person name="Suzuki M."/>
            <person name="Aoki J."/>
            <person name="Arakawa T."/>
            <person name="Iida J."/>
            <person name="Imamura K."/>
            <person name="Itoh M."/>
            <person name="Kato T."/>
            <person name="Kawaji H."/>
            <person name="Kawagashira N."/>
            <person name="Kawashima T."/>
            <person name="Kojima M."/>
            <person name="Kondo S."/>
            <person name="Konno H."/>
            <person name="Nakano K."/>
            <person name="Ninomiya N."/>
            <person name="Nishio T."/>
            <person name="Okada M."/>
            <person name="Plessy C."/>
            <person name="Shibata K."/>
            <person name="Shiraki T."/>
            <person name="Suzuki S."/>
            <person name="Tagami M."/>
            <person name="Waki K."/>
            <person name="Watahiki A."/>
            <person name="Okamura-Oho Y."/>
            <person name="Suzuki H."/>
            <person name="Kawai J."/>
            <person name="Hayashizaki Y."/>
        </authorList>
    </citation>
    <scope>NUCLEOTIDE SEQUENCE [LARGE SCALE MRNA]</scope>
    <source>
        <strain>C57BL/6J</strain>
        <strain>NOD</strain>
        <tissue>Kidney</tissue>
    </source>
</reference>
<reference key="2">
    <citation type="journal article" date="2004" name="Genome Res.">
        <title>The status, quality, and expansion of the NIH full-length cDNA project: the Mammalian Gene Collection (MGC).</title>
        <authorList>
            <consortium name="The MGC Project Team"/>
        </authorList>
    </citation>
    <scope>NUCLEOTIDE SEQUENCE [LARGE SCALE MRNA]</scope>
    <source>
        <strain>C57BL/6J</strain>
        <tissue>Brain</tissue>
    </source>
</reference>
<feature type="chain" id="PRO_0000221055" description="Putative gamma-secretase subunit APH-1C">
    <location>
        <begin position="1"/>
        <end position="258"/>
    </location>
</feature>
<feature type="transmembrane region" description="Helical; Name=1" evidence="2">
    <location>
        <begin position="5"/>
        <end position="25"/>
    </location>
</feature>
<feature type="transmembrane region" description="Helical; Name=2" evidence="2">
    <location>
        <begin position="32"/>
        <end position="52"/>
    </location>
</feature>
<feature type="transmembrane region" description="Helical; Name=3" evidence="2">
    <location>
        <begin position="71"/>
        <end position="91"/>
    </location>
</feature>
<feature type="transmembrane region" description="Helical; Name=4" evidence="2">
    <location>
        <begin position="116"/>
        <end position="136"/>
    </location>
</feature>
<feature type="transmembrane region" description="Helical; Name=5" evidence="2">
    <location>
        <begin position="161"/>
        <end position="181"/>
    </location>
</feature>
<feature type="transmembrane region" description="Helical; Name=6" evidence="2">
    <location>
        <begin position="187"/>
        <end position="207"/>
    </location>
</feature>
<feature type="transmembrane region" description="Helical; Name=7" evidence="2">
    <location>
        <begin position="214"/>
        <end position="234"/>
    </location>
</feature>